<sequence length="106" mass="11601">YLFLFRFIGVDTLRRSKPPIRLNTLIPVAKVFGANFSFASLRLEILIFSGLTGWNSKSKASHVYSSSVGYSSNSIASLSIIVSNTSSRNGSWISTNRTPICLSPIV</sequence>
<organism>
    <name type="scientific">Claviceps purpurea</name>
    <name type="common">Ergot fungus</name>
    <name type="synonym">Sphacelia segetum</name>
    <dbReference type="NCBI Taxonomy" id="5111"/>
    <lineage>
        <taxon>Eukaryota</taxon>
        <taxon>Fungi</taxon>
        <taxon>Dikarya</taxon>
        <taxon>Ascomycota</taxon>
        <taxon>Pezizomycotina</taxon>
        <taxon>Sordariomycetes</taxon>
        <taxon>Hypocreomycetidae</taxon>
        <taxon>Hypocreales</taxon>
        <taxon>Clavicipitaceae</taxon>
        <taxon>Claviceps</taxon>
    </lineage>
</organism>
<comment type="subcellular location">
    <subcellularLocation>
        <location evidence="1">Mitochondrion</location>
    </subcellularLocation>
</comment>
<protein>
    <recommendedName>
        <fullName>Uncharacterized 11.6 kDa protein</fullName>
    </recommendedName>
    <alternativeName>
        <fullName>ORF4</fullName>
    </alternativeName>
</protein>
<name>YPC4_CLAPU</name>
<keyword id="KW-0496">Mitochondrion</keyword>
<keyword id="KW-0614">Plasmid</keyword>
<feature type="chain" id="PRO_0000196890" description="Uncharacterized 11.6 kDa protein">
    <location>
        <begin position="1"/>
        <end position="106"/>
    </location>
</feature>
<proteinExistence type="predicted"/>
<reference key="1">
    <citation type="journal article" date="1989" name="Mol. Gen. Genet.">
        <title>The linear mitochondrial plasmid pClK1 of the phytopathogenic fungus Claviceps purpurea may code for a DNA polymerase and an RNA polymerase.</title>
        <authorList>
            <person name="Oeser B."/>
            <person name="Tudzynski P."/>
        </authorList>
    </citation>
    <scope>NUCLEOTIDE SEQUENCE [GENOMIC DNA]</scope>
    <source>
        <strain>K</strain>
    </source>
</reference>
<accession>P22369</accession>
<evidence type="ECO:0000305" key="1"/>
<geneLocation type="mitochondrion"/>
<geneLocation type="plasmid">
    <name>pClK1</name>
</geneLocation>
<dbReference type="EMBL" id="X15648">
    <property type="status" value="NOT_ANNOTATED_CDS"/>
    <property type="molecule type" value="Genomic_DNA"/>
</dbReference>
<dbReference type="PIR" id="JQ0304">
    <property type="entry name" value="JQ0304"/>
</dbReference>
<dbReference type="GO" id="GO:0005739">
    <property type="term" value="C:mitochondrion"/>
    <property type="evidence" value="ECO:0007669"/>
    <property type="project" value="UniProtKB-SubCell"/>
</dbReference>